<reference key="1">
    <citation type="submission" date="2009-03" db="EMBL/GenBank/DDBJ databases">
        <title>Complete genome sequence of Edwardsiella ictaluri 93-146.</title>
        <authorList>
            <person name="Williams M.L."/>
            <person name="Gillaspy A.F."/>
            <person name="Dyer D.W."/>
            <person name="Thune R.L."/>
            <person name="Waldbieser G.C."/>
            <person name="Schuster S.C."/>
            <person name="Gipson J."/>
            <person name="Zaitshik J."/>
            <person name="Landry C."/>
            <person name="Lawrence M.L."/>
        </authorList>
    </citation>
    <scope>NUCLEOTIDE SEQUENCE [LARGE SCALE GENOMIC DNA]</scope>
    <source>
        <strain>93-146</strain>
    </source>
</reference>
<organism>
    <name type="scientific">Edwardsiella ictaluri (strain 93-146)</name>
    <dbReference type="NCBI Taxonomy" id="634503"/>
    <lineage>
        <taxon>Bacteria</taxon>
        <taxon>Pseudomonadati</taxon>
        <taxon>Pseudomonadota</taxon>
        <taxon>Gammaproteobacteria</taxon>
        <taxon>Enterobacterales</taxon>
        <taxon>Hafniaceae</taxon>
        <taxon>Edwardsiella</taxon>
    </lineage>
</organism>
<feature type="chain" id="PRO_1000213189" description="Thiosulfate sulfurtransferase GlpE">
    <location>
        <begin position="1"/>
        <end position="109"/>
    </location>
</feature>
<feature type="domain" description="Rhodanese" evidence="1">
    <location>
        <begin position="17"/>
        <end position="105"/>
    </location>
</feature>
<feature type="active site" description="Cysteine persulfide intermediate" evidence="1">
    <location>
        <position position="65"/>
    </location>
</feature>
<sequence length="109" mass="11875">MEQFETIAVAQAQQMLAQGQALLLDIRDAQSYAAGHVPGALHLTDATLPALMRQHDGVQPVMVMCYHGNSSRGAAQYLLHQGFDEVYSIDGGFDAWQRAYPEEVARGGD</sequence>
<accession>C5B970</accession>
<name>GLPE_EDWI9</name>
<evidence type="ECO:0000255" key="1">
    <source>
        <dbReference type="HAMAP-Rule" id="MF_01009"/>
    </source>
</evidence>
<comment type="function">
    <text evidence="1">Transferase that catalyzes the transfer of sulfur from thiosulfate to thiophilic acceptors such as cyanide or dithiols. May function in a CysM-independent thiosulfate assimilation pathway by catalyzing the conversion of thiosulfate to sulfite, which can then be used for L-cysteine biosynthesis.</text>
</comment>
<comment type="catalytic activity">
    <reaction evidence="1">
        <text>thiosulfate + hydrogen cyanide = thiocyanate + sulfite + 2 H(+)</text>
        <dbReference type="Rhea" id="RHEA:16881"/>
        <dbReference type="ChEBI" id="CHEBI:15378"/>
        <dbReference type="ChEBI" id="CHEBI:17359"/>
        <dbReference type="ChEBI" id="CHEBI:18022"/>
        <dbReference type="ChEBI" id="CHEBI:18407"/>
        <dbReference type="ChEBI" id="CHEBI:33542"/>
        <dbReference type="EC" id="2.8.1.1"/>
    </reaction>
</comment>
<comment type="catalytic activity">
    <reaction evidence="1">
        <text>thiosulfate + [thioredoxin]-dithiol = [thioredoxin]-disulfide + hydrogen sulfide + sulfite + 2 H(+)</text>
        <dbReference type="Rhea" id="RHEA:83859"/>
        <dbReference type="Rhea" id="RHEA-COMP:10698"/>
        <dbReference type="Rhea" id="RHEA-COMP:10700"/>
        <dbReference type="ChEBI" id="CHEBI:15378"/>
        <dbReference type="ChEBI" id="CHEBI:17359"/>
        <dbReference type="ChEBI" id="CHEBI:29919"/>
        <dbReference type="ChEBI" id="CHEBI:29950"/>
        <dbReference type="ChEBI" id="CHEBI:33542"/>
        <dbReference type="ChEBI" id="CHEBI:50058"/>
    </reaction>
</comment>
<comment type="subcellular location">
    <subcellularLocation>
        <location evidence="1">Cytoplasm</location>
    </subcellularLocation>
</comment>
<comment type="similarity">
    <text evidence="1">Belongs to the GlpE family.</text>
</comment>
<keyword id="KW-0963">Cytoplasm</keyword>
<keyword id="KW-0808">Transferase</keyword>
<gene>
    <name evidence="1" type="primary">glpE</name>
    <name type="ordered locus">NT01EI_3682</name>
</gene>
<dbReference type="EC" id="2.8.1.1" evidence="1"/>
<dbReference type="EMBL" id="CP001600">
    <property type="protein sequence ID" value="ACR70810.1"/>
    <property type="molecule type" value="Genomic_DNA"/>
</dbReference>
<dbReference type="RefSeq" id="WP_015872848.1">
    <property type="nucleotide sequence ID" value="NZ_CP169062.1"/>
</dbReference>
<dbReference type="SMR" id="C5B970"/>
<dbReference type="STRING" id="67780.B6E78_10050"/>
<dbReference type="GeneID" id="69540521"/>
<dbReference type="KEGG" id="eic:NT01EI_3682"/>
<dbReference type="PATRIC" id="fig|634503.3.peg.3285"/>
<dbReference type="HOGENOM" id="CLU_089574_14_0_6"/>
<dbReference type="OrthoDB" id="9811849at2"/>
<dbReference type="Proteomes" id="UP000001485">
    <property type="component" value="Chromosome"/>
</dbReference>
<dbReference type="GO" id="GO:0005737">
    <property type="term" value="C:cytoplasm"/>
    <property type="evidence" value="ECO:0007669"/>
    <property type="project" value="UniProtKB-SubCell"/>
</dbReference>
<dbReference type="GO" id="GO:0004792">
    <property type="term" value="F:thiosulfate-cyanide sulfurtransferase activity"/>
    <property type="evidence" value="ECO:0007669"/>
    <property type="project" value="UniProtKB-UniRule"/>
</dbReference>
<dbReference type="GO" id="GO:0006071">
    <property type="term" value="P:glycerol metabolic process"/>
    <property type="evidence" value="ECO:0007669"/>
    <property type="project" value="UniProtKB-UniRule"/>
</dbReference>
<dbReference type="CDD" id="cd01444">
    <property type="entry name" value="GlpE_ST"/>
    <property type="match status" value="1"/>
</dbReference>
<dbReference type="Gene3D" id="3.40.250.10">
    <property type="entry name" value="Rhodanese-like domain"/>
    <property type="match status" value="1"/>
</dbReference>
<dbReference type="HAMAP" id="MF_01009">
    <property type="entry name" value="Thiosulf_sulfurtr"/>
    <property type="match status" value="1"/>
</dbReference>
<dbReference type="InterPro" id="IPR050229">
    <property type="entry name" value="GlpE_sulfurtransferase"/>
</dbReference>
<dbReference type="InterPro" id="IPR001763">
    <property type="entry name" value="Rhodanese-like_dom"/>
</dbReference>
<dbReference type="InterPro" id="IPR036873">
    <property type="entry name" value="Rhodanese-like_dom_sf"/>
</dbReference>
<dbReference type="InterPro" id="IPR023695">
    <property type="entry name" value="Thiosulf_sulfurTrfase"/>
</dbReference>
<dbReference type="InterPro" id="IPR001307">
    <property type="entry name" value="Thiosulphate_STrfase_CS"/>
</dbReference>
<dbReference type="NCBIfam" id="NF001195">
    <property type="entry name" value="PRK00162.1"/>
    <property type="match status" value="1"/>
</dbReference>
<dbReference type="PANTHER" id="PTHR43031">
    <property type="entry name" value="FAD-DEPENDENT OXIDOREDUCTASE"/>
    <property type="match status" value="1"/>
</dbReference>
<dbReference type="PANTHER" id="PTHR43031:SF6">
    <property type="entry name" value="THIOSULFATE SULFURTRANSFERASE GLPE"/>
    <property type="match status" value="1"/>
</dbReference>
<dbReference type="Pfam" id="PF00581">
    <property type="entry name" value="Rhodanese"/>
    <property type="match status" value="1"/>
</dbReference>
<dbReference type="SMART" id="SM00450">
    <property type="entry name" value="RHOD"/>
    <property type="match status" value="1"/>
</dbReference>
<dbReference type="SUPFAM" id="SSF52821">
    <property type="entry name" value="Rhodanese/Cell cycle control phosphatase"/>
    <property type="match status" value="1"/>
</dbReference>
<dbReference type="PROSITE" id="PS00380">
    <property type="entry name" value="RHODANESE_1"/>
    <property type="match status" value="1"/>
</dbReference>
<dbReference type="PROSITE" id="PS50206">
    <property type="entry name" value="RHODANESE_3"/>
    <property type="match status" value="1"/>
</dbReference>
<protein>
    <recommendedName>
        <fullName evidence="1">Thiosulfate sulfurtransferase GlpE</fullName>
        <ecNumber evidence="1">2.8.1.1</ecNumber>
    </recommendedName>
</protein>
<proteinExistence type="inferred from homology"/>